<reference key="1">
    <citation type="journal article" date="2002" name="J. Bacteriol.">
        <title>Whole-genome comparison of Mycobacterium tuberculosis clinical and laboratory strains.</title>
        <authorList>
            <person name="Fleischmann R.D."/>
            <person name="Alland D."/>
            <person name="Eisen J.A."/>
            <person name="Carpenter L."/>
            <person name="White O."/>
            <person name="Peterson J.D."/>
            <person name="DeBoy R.T."/>
            <person name="Dodson R.J."/>
            <person name="Gwinn M.L."/>
            <person name="Haft D.H."/>
            <person name="Hickey E.K."/>
            <person name="Kolonay J.F."/>
            <person name="Nelson W.C."/>
            <person name="Umayam L.A."/>
            <person name="Ermolaeva M.D."/>
            <person name="Salzberg S.L."/>
            <person name="Delcher A."/>
            <person name="Utterback T.R."/>
            <person name="Weidman J.F."/>
            <person name="Khouri H.M."/>
            <person name="Gill J."/>
            <person name="Mikula A."/>
            <person name="Bishai W."/>
            <person name="Jacobs W.R. Jr."/>
            <person name="Venter J.C."/>
            <person name="Fraser C.M."/>
        </authorList>
    </citation>
    <scope>NUCLEOTIDE SEQUENCE [LARGE SCALE GENOMIC DNA]</scope>
    <source>
        <strain>CDC 1551 / Oshkosh</strain>
    </source>
</reference>
<proteinExistence type="inferred from homology"/>
<accession>P9WFF0</accession>
<accession>L0T9F6</accession>
<accession>P0A660</accession>
<accession>P50042</accession>
<protein>
    <recommendedName>
        <fullName evidence="2">Urease subunit alpha</fullName>
        <ecNumber evidence="2">3.5.1.5</ecNumber>
    </recommendedName>
    <alternativeName>
        <fullName evidence="2">Urea amidohydrolase subunit alpha</fullName>
    </alternativeName>
</protein>
<evidence type="ECO:0000250" key="1"/>
<evidence type="ECO:0000255" key="2">
    <source>
        <dbReference type="HAMAP-Rule" id="MF_01953"/>
    </source>
</evidence>
<feature type="initiator methionine" description="Removed" evidence="1">
    <location>
        <position position="1"/>
    </location>
</feature>
<feature type="chain" id="PRO_0000428550" description="Urease subunit alpha">
    <location>
        <begin position="2"/>
        <end position="577"/>
    </location>
</feature>
<feature type="domain" description="Urease" evidence="2">
    <location>
        <begin position="136"/>
        <end position="577"/>
    </location>
</feature>
<feature type="active site" description="Proton donor" evidence="2">
    <location>
        <position position="327"/>
    </location>
</feature>
<feature type="binding site" evidence="2">
    <location>
        <position position="141"/>
    </location>
    <ligand>
        <name>Ni(2+)</name>
        <dbReference type="ChEBI" id="CHEBI:49786"/>
        <label>1</label>
    </ligand>
</feature>
<feature type="binding site" evidence="2">
    <location>
        <position position="143"/>
    </location>
    <ligand>
        <name>Ni(2+)</name>
        <dbReference type="ChEBI" id="CHEBI:49786"/>
        <label>1</label>
    </ligand>
</feature>
<feature type="binding site" description="via carbamate group" evidence="2">
    <location>
        <position position="224"/>
    </location>
    <ligand>
        <name>Ni(2+)</name>
        <dbReference type="ChEBI" id="CHEBI:49786"/>
        <label>1</label>
    </ligand>
</feature>
<feature type="binding site" description="via carbamate group" evidence="2">
    <location>
        <position position="224"/>
    </location>
    <ligand>
        <name>Ni(2+)</name>
        <dbReference type="ChEBI" id="CHEBI:49786"/>
        <label>2</label>
    </ligand>
</feature>
<feature type="binding site" evidence="2">
    <location>
        <position position="226"/>
    </location>
    <ligand>
        <name>substrate</name>
    </ligand>
</feature>
<feature type="binding site" evidence="2">
    <location>
        <position position="253"/>
    </location>
    <ligand>
        <name>Ni(2+)</name>
        <dbReference type="ChEBI" id="CHEBI:49786"/>
        <label>2</label>
    </ligand>
</feature>
<feature type="binding site" evidence="2">
    <location>
        <position position="279"/>
    </location>
    <ligand>
        <name>Ni(2+)</name>
        <dbReference type="ChEBI" id="CHEBI:49786"/>
        <label>2</label>
    </ligand>
</feature>
<feature type="binding site" evidence="2">
    <location>
        <position position="367"/>
    </location>
    <ligand>
        <name>Ni(2+)</name>
        <dbReference type="ChEBI" id="CHEBI:49786"/>
        <label>1</label>
    </ligand>
</feature>
<feature type="modified residue" description="N6-carboxylysine" evidence="2">
    <location>
        <position position="224"/>
    </location>
</feature>
<dbReference type="EC" id="3.5.1.5" evidence="2"/>
<dbReference type="EMBL" id="AE000516">
    <property type="protein sequence ID" value="AAK46169.1"/>
    <property type="molecule type" value="Genomic_DNA"/>
</dbReference>
<dbReference type="PIR" id="B70665">
    <property type="entry name" value="B70665"/>
</dbReference>
<dbReference type="RefSeq" id="WP_003899049.1">
    <property type="nucleotide sequence ID" value="NZ_KK341227.1"/>
</dbReference>
<dbReference type="SMR" id="P9WFF0"/>
<dbReference type="KEGG" id="mtc:MT1898"/>
<dbReference type="PATRIC" id="fig|83331.31.peg.2042"/>
<dbReference type="HOGENOM" id="CLU_000980_0_0_11"/>
<dbReference type="UniPathway" id="UPA00258">
    <property type="reaction ID" value="UER00370"/>
</dbReference>
<dbReference type="Proteomes" id="UP000001020">
    <property type="component" value="Chromosome"/>
</dbReference>
<dbReference type="GO" id="GO:0005737">
    <property type="term" value="C:cytoplasm"/>
    <property type="evidence" value="ECO:0007669"/>
    <property type="project" value="UniProtKB-SubCell"/>
</dbReference>
<dbReference type="GO" id="GO:0016151">
    <property type="term" value="F:nickel cation binding"/>
    <property type="evidence" value="ECO:0007669"/>
    <property type="project" value="UniProtKB-UniRule"/>
</dbReference>
<dbReference type="GO" id="GO:0009039">
    <property type="term" value="F:urease activity"/>
    <property type="evidence" value="ECO:0007669"/>
    <property type="project" value="UniProtKB-UniRule"/>
</dbReference>
<dbReference type="GO" id="GO:0043419">
    <property type="term" value="P:urea catabolic process"/>
    <property type="evidence" value="ECO:0007669"/>
    <property type="project" value="UniProtKB-UniRule"/>
</dbReference>
<dbReference type="CDD" id="cd00375">
    <property type="entry name" value="Urease_alpha"/>
    <property type="match status" value="1"/>
</dbReference>
<dbReference type="Gene3D" id="3.20.20.140">
    <property type="entry name" value="Metal-dependent hydrolases"/>
    <property type="match status" value="1"/>
</dbReference>
<dbReference type="Gene3D" id="2.30.40.10">
    <property type="entry name" value="Urease, subunit C, domain 1"/>
    <property type="match status" value="1"/>
</dbReference>
<dbReference type="HAMAP" id="MF_01953">
    <property type="entry name" value="Urease_alpha"/>
    <property type="match status" value="1"/>
</dbReference>
<dbReference type="InterPro" id="IPR006680">
    <property type="entry name" value="Amidohydro-rel"/>
</dbReference>
<dbReference type="InterPro" id="IPR011059">
    <property type="entry name" value="Metal-dep_hydrolase_composite"/>
</dbReference>
<dbReference type="InterPro" id="IPR032466">
    <property type="entry name" value="Metal_Hydrolase"/>
</dbReference>
<dbReference type="InterPro" id="IPR011612">
    <property type="entry name" value="Urease_alpha_N_dom"/>
</dbReference>
<dbReference type="InterPro" id="IPR050112">
    <property type="entry name" value="Urease_alpha_subunit"/>
</dbReference>
<dbReference type="InterPro" id="IPR017950">
    <property type="entry name" value="Urease_AS"/>
</dbReference>
<dbReference type="InterPro" id="IPR005848">
    <property type="entry name" value="Urease_asu"/>
</dbReference>
<dbReference type="InterPro" id="IPR017951">
    <property type="entry name" value="Urease_asu_c"/>
</dbReference>
<dbReference type="InterPro" id="IPR029754">
    <property type="entry name" value="Urease_Ni-bd"/>
</dbReference>
<dbReference type="NCBIfam" id="NF009685">
    <property type="entry name" value="PRK13206.1"/>
    <property type="match status" value="1"/>
</dbReference>
<dbReference type="NCBIfam" id="NF009686">
    <property type="entry name" value="PRK13207.1"/>
    <property type="match status" value="1"/>
</dbReference>
<dbReference type="NCBIfam" id="TIGR01792">
    <property type="entry name" value="urease_alph"/>
    <property type="match status" value="1"/>
</dbReference>
<dbReference type="PANTHER" id="PTHR43440">
    <property type="entry name" value="UREASE"/>
    <property type="match status" value="1"/>
</dbReference>
<dbReference type="PANTHER" id="PTHR43440:SF1">
    <property type="entry name" value="UREASE"/>
    <property type="match status" value="1"/>
</dbReference>
<dbReference type="Pfam" id="PF01979">
    <property type="entry name" value="Amidohydro_1"/>
    <property type="match status" value="1"/>
</dbReference>
<dbReference type="Pfam" id="PF00449">
    <property type="entry name" value="Urease_alpha"/>
    <property type="match status" value="1"/>
</dbReference>
<dbReference type="PRINTS" id="PR01752">
    <property type="entry name" value="UREASE"/>
</dbReference>
<dbReference type="SUPFAM" id="SSF51338">
    <property type="entry name" value="Composite domain of metallo-dependent hydrolases"/>
    <property type="match status" value="2"/>
</dbReference>
<dbReference type="SUPFAM" id="SSF51556">
    <property type="entry name" value="Metallo-dependent hydrolases"/>
    <property type="match status" value="1"/>
</dbReference>
<dbReference type="PROSITE" id="PS01120">
    <property type="entry name" value="UREASE_1"/>
    <property type="match status" value="1"/>
</dbReference>
<dbReference type="PROSITE" id="PS00145">
    <property type="entry name" value="UREASE_2"/>
    <property type="match status" value="1"/>
</dbReference>
<dbReference type="PROSITE" id="PS51368">
    <property type="entry name" value="UREASE_3"/>
    <property type="match status" value="1"/>
</dbReference>
<organism>
    <name type="scientific">Mycobacterium tuberculosis (strain CDC 1551 / Oshkosh)</name>
    <dbReference type="NCBI Taxonomy" id="83331"/>
    <lineage>
        <taxon>Bacteria</taxon>
        <taxon>Bacillati</taxon>
        <taxon>Actinomycetota</taxon>
        <taxon>Actinomycetes</taxon>
        <taxon>Mycobacteriales</taxon>
        <taxon>Mycobacteriaceae</taxon>
        <taxon>Mycobacterium</taxon>
        <taxon>Mycobacterium tuberculosis complex</taxon>
    </lineage>
</organism>
<comment type="catalytic activity">
    <reaction evidence="2">
        <text>urea + 2 H2O + H(+) = hydrogencarbonate + 2 NH4(+)</text>
        <dbReference type="Rhea" id="RHEA:20557"/>
        <dbReference type="ChEBI" id="CHEBI:15377"/>
        <dbReference type="ChEBI" id="CHEBI:15378"/>
        <dbReference type="ChEBI" id="CHEBI:16199"/>
        <dbReference type="ChEBI" id="CHEBI:17544"/>
        <dbReference type="ChEBI" id="CHEBI:28938"/>
        <dbReference type="EC" id="3.5.1.5"/>
    </reaction>
</comment>
<comment type="cofactor">
    <cofactor evidence="2">
        <name>Ni cation</name>
        <dbReference type="ChEBI" id="CHEBI:25516"/>
    </cofactor>
    <text evidence="2">Binds 2 nickel ions per subunit.</text>
</comment>
<comment type="pathway">
    <text evidence="2">Nitrogen metabolism; urea degradation; CO(2) and NH(3) from urea (urease route): step 1/1.</text>
</comment>
<comment type="subunit">
    <text evidence="2">Heterotrimer of UreA (gamma), UreB (beta) and UreC (alpha) subunits. Three heterotrimers associate to form the active enzyme.</text>
</comment>
<comment type="subcellular location">
    <subcellularLocation>
        <location evidence="2">Cytoplasm</location>
    </subcellularLocation>
</comment>
<comment type="PTM">
    <text evidence="2">Carboxylation allows a single lysine to coordinate two nickel ions.</text>
</comment>
<comment type="similarity">
    <text evidence="2">Belongs to the metallo-dependent hydrolases superfamily. Urease alpha subunit family.</text>
</comment>
<gene>
    <name evidence="2" type="primary">ureC</name>
    <name type="ordered locus">MT1898</name>
</gene>
<keyword id="KW-0963">Cytoplasm</keyword>
<keyword id="KW-0378">Hydrolase</keyword>
<keyword id="KW-0479">Metal-binding</keyword>
<keyword id="KW-0533">Nickel</keyword>
<keyword id="KW-1185">Reference proteome</keyword>
<name>URE1_MYCTO</name>
<sequence length="577" mass="60825">MARLSRERYAQLYGPTTGDRIRLADTNLLVEVTEDRCGGPGLAGDEAVFGGGKVLRESMGQGRASRADGAPDTVITGAVIIDYWGIIKADIGIRDGRIVGIGKAGNPDIMTGVHRDLVVGPSTEIISGNRRIVTAGTVDCHVHLICPQIIVEALAAGTTTIIGGGTGPAEGTKATTVTPGEWHLARMLESLDGWPVNFALLGKGNTVNPDALWEQLRGGASGFKLHEDWGSTPAAIDTCLAVADVAGVQVALHSDTLNETGFVEDTIGAIAGRSIHAYHTEGAGGGHAPDIITVAAQPNVLPSSTNPTRPHTVNTLDEHLDMLMVCHHLNPRIPEDLAFAESRIRPSTIAAEDVLHDMGAISMIGSDSQAMGRVGEVVLRTWQTAHVMKARRGALEGDPSGSQAADNNRVRRYIAKYTICPAIAHGMDHLIGSVEVGKLADLVLWEPAFFGVRPHVVLKGGAIAWAAMGDANASIPTPQPVLPRPMFGAAAATAAATSVHFVAPQSIDARLADRLAVNRGLAPVADVRAVGKTDLPLNDALPSIEVDPDTFTVRIDGQVWQPQPAAELPMTQRYFLF</sequence>